<name>PAM17_EREGS</name>
<sequence length="186" mass="20948">MLARGILRPALARAELGRAFSCSAQWQQAAGSTSGRELSWPDFFALRKTERRINTGSSVLTAFLTANCAWAYISTVQIDVTQMLFGFDPMVVLVGALFASSGLGYLCGPLMGSAFFRVKHRGQLEGYNHKNRVFLEHIKKNRVDASSQSFSNPLPDYYGEKIGSLQEYRQWLRDCQSHRRKAKEFL</sequence>
<comment type="function">
    <text evidence="1">Component of the PAM complex, a complex required for the translocation of transit peptide-containing proteins from the inner membrane into the mitochondrial matrix in an ATP-dependent manner.</text>
</comment>
<comment type="subunit">
    <text evidence="1">Component of the PAM complex, at least composed of mtHsp70 (SSC1), MGE1, TIM44, PAM16, PAM17 and PAM18.</text>
</comment>
<comment type="subcellular location">
    <subcellularLocation>
        <location evidence="1">Mitochondrion inner membrane</location>
        <topology evidence="1">Multi-pass membrane protein</topology>
    </subcellularLocation>
</comment>
<comment type="similarity">
    <text evidence="3">Belongs to the PAM17 family.</text>
</comment>
<feature type="transit peptide" description="Mitochondrion" evidence="2">
    <location>
        <begin position="1"/>
        <end position="27"/>
    </location>
</feature>
<feature type="chain" id="PRO_0000043149" description="Presequence translocated-associated motor subunit PAM17, mitochondrial">
    <location>
        <begin position="28"/>
        <end position="186"/>
    </location>
</feature>
<feature type="transmembrane region" description="Helical" evidence="2">
    <location>
        <begin position="58"/>
        <end position="78"/>
    </location>
</feature>
<feature type="transmembrane region" description="Helical" evidence="2">
    <location>
        <begin position="93"/>
        <end position="115"/>
    </location>
</feature>
<proteinExistence type="inferred from homology"/>
<organism>
    <name type="scientific">Eremothecium gossypii (strain ATCC 10895 / CBS 109.51 / FGSC 9923 / NRRL Y-1056)</name>
    <name type="common">Yeast</name>
    <name type="synonym">Ashbya gossypii</name>
    <dbReference type="NCBI Taxonomy" id="284811"/>
    <lineage>
        <taxon>Eukaryota</taxon>
        <taxon>Fungi</taxon>
        <taxon>Dikarya</taxon>
        <taxon>Ascomycota</taxon>
        <taxon>Saccharomycotina</taxon>
        <taxon>Saccharomycetes</taxon>
        <taxon>Saccharomycetales</taxon>
        <taxon>Saccharomycetaceae</taxon>
        <taxon>Eremothecium</taxon>
    </lineage>
</organism>
<evidence type="ECO:0000250" key="1"/>
<evidence type="ECO:0000255" key="2"/>
<evidence type="ECO:0000305" key="3"/>
<dbReference type="EMBL" id="AE016817">
    <property type="protein sequence ID" value="AAS52248.1"/>
    <property type="molecule type" value="Genomic_DNA"/>
</dbReference>
<dbReference type="RefSeq" id="NP_984424.1">
    <property type="nucleotide sequence ID" value="NM_209777.1"/>
</dbReference>
<dbReference type="FunCoup" id="Q759E9">
    <property type="interactions" value="60"/>
</dbReference>
<dbReference type="STRING" id="284811.Q759E9"/>
<dbReference type="EnsemblFungi" id="AAS52248">
    <property type="protein sequence ID" value="AAS52248"/>
    <property type="gene ID" value="AGOS_ADR328W"/>
</dbReference>
<dbReference type="GeneID" id="4620590"/>
<dbReference type="KEGG" id="ago:AGOS_ADR328W"/>
<dbReference type="eggNOG" id="ENOG502S1B1">
    <property type="taxonomic scope" value="Eukaryota"/>
</dbReference>
<dbReference type="HOGENOM" id="CLU_068297_2_0_1"/>
<dbReference type="InParanoid" id="Q759E9"/>
<dbReference type="OMA" id="MIFGFDP"/>
<dbReference type="OrthoDB" id="5970083at2759"/>
<dbReference type="Proteomes" id="UP000000591">
    <property type="component" value="Chromosome IV"/>
</dbReference>
<dbReference type="GO" id="GO:0001405">
    <property type="term" value="C:PAM complex, Tim23 associated import motor"/>
    <property type="evidence" value="ECO:0000318"/>
    <property type="project" value="GO_Central"/>
</dbReference>
<dbReference type="GO" id="GO:0030150">
    <property type="term" value="P:protein import into mitochondrial matrix"/>
    <property type="evidence" value="ECO:0000318"/>
    <property type="project" value="GO_Central"/>
</dbReference>
<dbReference type="InterPro" id="IPR013875">
    <property type="entry name" value="Pam17"/>
</dbReference>
<dbReference type="PANTHER" id="PTHR28021">
    <property type="entry name" value="PRESEQUENCE TRANSLOCATED-ASSOCIATED MOTOR SUBUNIT PAM17, MITOCHONDRIAL"/>
    <property type="match status" value="1"/>
</dbReference>
<dbReference type="PANTHER" id="PTHR28021:SF1">
    <property type="entry name" value="PRESEQUENCE TRANSLOCATED-ASSOCIATED MOTOR SUBUNIT PAM17, MITOCHONDRIAL"/>
    <property type="match status" value="1"/>
</dbReference>
<dbReference type="Pfam" id="PF08566">
    <property type="entry name" value="Pam17"/>
    <property type="match status" value="1"/>
</dbReference>
<keyword id="KW-0472">Membrane</keyword>
<keyword id="KW-0496">Mitochondrion</keyword>
<keyword id="KW-0999">Mitochondrion inner membrane</keyword>
<keyword id="KW-0653">Protein transport</keyword>
<keyword id="KW-1185">Reference proteome</keyword>
<keyword id="KW-0809">Transit peptide</keyword>
<keyword id="KW-0811">Translocation</keyword>
<keyword id="KW-0812">Transmembrane</keyword>
<keyword id="KW-1133">Transmembrane helix</keyword>
<keyword id="KW-0813">Transport</keyword>
<accession>Q759E9</accession>
<gene>
    <name type="primary">PAM17</name>
    <name type="ordered locus">ADR328W</name>
</gene>
<protein>
    <recommendedName>
        <fullName>Presequence translocated-associated motor subunit PAM17, mitochondrial</fullName>
    </recommendedName>
</protein>
<reference key="1">
    <citation type="journal article" date="2004" name="Science">
        <title>The Ashbya gossypii genome as a tool for mapping the ancient Saccharomyces cerevisiae genome.</title>
        <authorList>
            <person name="Dietrich F.S."/>
            <person name="Voegeli S."/>
            <person name="Brachat S."/>
            <person name="Lerch A."/>
            <person name="Gates K."/>
            <person name="Steiner S."/>
            <person name="Mohr C."/>
            <person name="Poehlmann R."/>
            <person name="Luedi P."/>
            <person name="Choi S."/>
            <person name="Wing R.A."/>
            <person name="Flavier A."/>
            <person name="Gaffney T.D."/>
            <person name="Philippsen P."/>
        </authorList>
    </citation>
    <scope>NUCLEOTIDE SEQUENCE [LARGE SCALE GENOMIC DNA]</scope>
    <source>
        <strain>ATCC 10895 / CBS 109.51 / FGSC 9923 / NRRL Y-1056</strain>
    </source>
</reference>
<reference key="2">
    <citation type="journal article" date="2013" name="G3 (Bethesda)">
        <title>Genomes of Ashbya fungi isolated from insects reveal four mating-type loci, numerous translocations, lack of transposons, and distinct gene duplications.</title>
        <authorList>
            <person name="Dietrich F.S."/>
            <person name="Voegeli S."/>
            <person name="Kuo S."/>
            <person name="Philippsen P."/>
        </authorList>
    </citation>
    <scope>GENOME REANNOTATION</scope>
    <source>
        <strain>ATCC 10895 / CBS 109.51 / FGSC 9923 / NRRL Y-1056</strain>
    </source>
</reference>